<sequence>MAETLITKPPLSLSFTSLSSMLPSLSLSTANRHLSVTDTIPLPNSNSNATPPLRIAIIGFGNYGQFLAETLISQGHILFAHSRSDHSSAARRLGVSYFTDLHDLCERHPDVVLLCTSILSIENILKTLPFQRLRRNTLFVDVLSVKEFAKTLLLQYLPEDFDILCTHPMFGPQSVSSNHGWRGLRFVYDKVRIGEERLRVSRCESFLEIFVREGCEMVEMSVTDHDKFAAESQFITHTLGRLLGMLKLISTPINTKGYEALLDLAENICGDSFDLYYGLFVYNNNSLEVLERIDLAFEALRKELFSRLHGVVRKQSFEGEAKKVHVFPNCGENDASLDMMRSEDVVVKYEYNSQVSGSVNDGSRLKIGIVGFGNFGQFLGKTMVKQGHTVLAYSRSDYTDEAAKLGVSYFSDLDDLFEEHPEVIILCTSILSTEKVLESLPFQRLKRSTLFVDVLSVKEFPRNLFLQTLPQDFDILCTHPMFGPESGKNGWNNLAFVFDKVRIGMDDRRKSRCNSFLDIFAREGCRMVEMSCAEHDWHAAGSQFITHTVGRLLEKLSLESTPIDTKGYETLLKLVENTAGDSFDLYYGLFLYNPNAMEQLERFHVAFESLKTQLFGRLHSQHSHELAKSSSPKTTKLLTS</sequence>
<comment type="function">
    <text evidence="4">Involved in the biosynthesis of tyrosine. Has no prephenate dehydrogenase activity.</text>
</comment>
<comment type="catalytic activity">
    <reaction>
        <text>L-arogenate + NADP(+) = L-tyrosine + CO2 + NADPH</text>
        <dbReference type="Rhea" id="RHEA:15417"/>
        <dbReference type="ChEBI" id="CHEBI:16526"/>
        <dbReference type="ChEBI" id="CHEBI:57783"/>
        <dbReference type="ChEBI" id="CHEBI:58180"/>
        <dbReference type="ChEBI" id="CHEBI:58315"/>
        <dbReference type="ChEBI" id="CHEBI:58349"/>
        <dbReference type="EC" id="1.3.1.78"/>
    </reaction>
</comment>
<comment type="biophysicochemical properties">
    <kinetics>
        <KM evidence="3 4">10.2 uM for NADP</KM>
        <KM evidence="3 4">52.6 uM for arogenate</KM>
        <Vmax evidence="3 4">142.0 umol/min/mg enzyme</Vmax>
        <text>NADP increases the apparent affinity for arogenate. The two active domains have the same KM values for arogenate.</text>
    </kinetics>
</comment>
<comment type="pathway">
    <text>Amino-acid biosynthesis; L-tyrosine biosynthesis; L-tyrosine from L-arogenate (NADP(+) route): step 1/1.</text>
</comment>
<comment type="subcellular location">
    <subcellularLocation>
        <location evidence="6">Plastid</location>
        <location evidence="6">Chloroplast</location>
    </subcellularLocation>
</comment>
<comment type="tissue specificity">
    <text evidence="5">Expressed in roots, stems, leaves, flowers, siliques and seeds. More abundant in seeds.</text>
</comment>
<comment type="induction">
    <text evidence="3">Strongly inhibited by tyrosine.</text>
</comment>
<comment type="miscellaneous">
    <text>Unlike TYRAAT2, TYRAAT1 is composed of two highly similar and catalytically active peptide domains. No proteolytic cleavage between the two domains.</text>
</comment>
<comment type="similarity">
    <text evidence="6">Belongs to the prephenate/arogenate dehydrogenase family.</text>
</comment>
<comment type="sequence caution" evidence="6">
    <conflict type="erroneous gene model prediction">
        <sequence resource="EMBL-CDS" id="AAC62791"/>
    </conflict>
</comment>
<comment type="sequence caution" evidence="6">
    <conflict type="erroneous gene model prediction">
        <sequence resource="EMBL-CDS" id="BAB10786"/>
    </conflict>
</comment>
<name>TYRA1_ARATH</name>
<dbReference type="EC" id="1.3.1.78"/>
<dbReference type="EMBL" id="AF434681">
    <property type="protein sequence ID" value="AAL30405.1"/>
    <property type="molecule type" value="mRNA"/>
</dbReference>
<dbReference type="EMBL" id="AF096371">
    <property type="protein sequence ID" value="AAC62791.1"/>
    <property type="status" value="ALT_SEQ"/>
    <property type="molecule type" value="Genomic_DNA"/>
</dbReference>
<dbReference type="EMBL" id="AB028613">
    <property type="protein sequence ID" value="BAB10786.1"/>
    <property type="status" value="ALT_SEQ"/>
    <property type="molecule type" value="Genomic_DNA"/>
</dbReference>
<dbReference type="EMBL" id="CP002688">
    <property type="protein sequence ID" value="AED93921.1"/>
    <property type="molecule type" value="Genomic_DNA"/>
</dbReference>
<dbReference type="PIR" id="T01952">
    <property type="entry name" value="T01952"/>
</dbReference>
<dbReference type="RefSeq" id="NP_001331736.1">
    <property type="nucleotide sequence ID" value="NM_001344090.1"/>
</dbReference>
<dbReference type="RefSeq" id="NP_198343.1">
    <property type="nucleotide sequence ID" value="NM_122884.2"/>
</dbReference>
<dbReference type="SMR" id="Q944B6"/>
<dbReference type="BioGRID" id="18693">
    <property type="interactions" value="1"/>
</dbReference>
<dbReference type="FunCoup" id="Q944B6">
    <property type="interactions" value="300"/>
</dbReference>
<dbReference type="STRING" id="3702.Q944B6"/>
<dbReference type="GlyGen" id="Q944B6">
    <property type="glycosylation" value="1 site"/>
</dbReference>
<dbReference type="iPTMnet" id="Q944B6"/>
<dbReference type="PaxDb" id="3702-AT5G34930.1"/>
<dbReference type="ProteomicsDB" id="242803"/>
<dbReference type="EnsemblPlants" id="AT5G34930.1">
    <property type="protein sequence ID" value="AT5G34930.1"/>
    <property type="gene ID" value="AT5G34930"/>
</dbReference>
<dbReference type="GeneID" id="833436"/>
<dbReference type="Gramene" id="AT5G34930.1">
    <property type="protein sequence ID" value="AT5G34930.1"/>
    <property type="gene ID" value="AT5G34930"/>
</dbReference>
<dbReference type="KEGG" id="ath:AT5G34930"/>
<dbReference type="Araport" id="AT5G34930"/>
<dbReference type="TAIR" id="AT5G34930"/>
<dbReference type="eggNOG" id="KOG2380">
    <property type="taxonomic scope" value="Eukaryota"/>
</dbReference>
<dbReference type="HOGENOM" id="CLU_442363_0_0_1"/>
<dbReference type="InParanoid" id="Q944B6"/>
<dbReference type="OMA" id="VSRCDQF"/>
<dbReference type="PhylomeDB" id="Q944B6"/>
<dbReference type="BioCyc" id="ARA:AT5G34930-MONOMER"/>
<dbReference type="BioCyc" id="MetaCyc:AT5G34930-MONOMER"/>
<dbReference type="BRENDA" id="1.3.1.78">
    <property type="organism ID" value="399"/>
</dbReference>
<dbReference type="SABIO-RK" id="Q944B6"/>
<dbReference type="UniPathway" id="UPA00122">
    <property type="reaction ID" value="UER00960"/>
</dbReference>
<dbReference type="PRO" id="PR:Q944B6"/>
<dbReference type="Proteomes" id="UP000006548">
    <property type="component" value="Chromosome 5"/>
</dbReference>
<dbReference type="ExpressionAtlas" id="Q944B6">
    <property type="expression patterns" value="baseline and differential"/>
</dbReference>
<dbReference type="GO" id="GO:0009507">
    <property type="term" value="C:chloroplast"/>
    <property type="evidence" value="ECO:0007669"/>
    <property type="project" value="UniProtKB-SubCell"/>
</dbReference>
<dbReference type="GO" id="GO:0033730">
    <property type="term" value="F:arogenate dehydrogenase (NADP+) activity"/>
    <property type="evidence" value="ECO:0007669"/>
    <property type="project" value="UniProtKB-EC"/>
</dbReference>
<dbReference type="GO" id="GO:0070403">
    <property type="term" value="F:NAD+ binding"/>
    <property type="evidence" value="ECO:0007669"/>
    <property type="project" value="InterPro"/>
</dbReference>
<dbReference type="GO" id="GO:0008977">
    <property type="term" value="F:prephenate dehydrogenase (NAD+) activity"/>
    <property type="evidence" value="ECO:0007669"/>
    <property type="project" value="InterPro"/>
</dbReference>
<dbReference type="GO" id="GO:0004665">
    <property type="term" value="F:prephenate dehydrogenase (NADP+) activity"/>
    <property type="evidence" value="ECO:0007669"/>
    <property type="project" value="InterPro"/>
</dbReference>
<dbReference type="GO" id="GO:0006571">
    <property type="term" value="P:tyrosine biosynthetic process"/>
    <property type="evidence" value="ECO:0007669"/>
    <property type="project" value="UniProtKB-UniPathway"/>
</dbReference>
<dbReference type="Gene3D" id="3.40.50.720">
    <property type="entry name" value="NAD(P)-binding Rossmann-like Domain"/>
    <property type="match status" value="2"/>
</dbReference>
<dbReference type="InterPro" id="IPR008927">
    <property type="entry name" value="6-PGluconate_DH-like_C_sf"/>
</dbReference>
<dbReference type="InterPro" id="IPR036291">
    <property type="entry name" value="NAD(P)-bd_dom_sf"/>
</dbReference>
<dbReference type="InterPro" id="IPR028939">
    <property type="entry name" value="P5C_Rdtase_cat_N"/>
</dbReference>
<dbReference type="InterPro" id="IPR046826">
    <property type="entry name" value="PDH_N"/>
</dbReference>
<dbReference type="InterPro" id="IPR003099">
    <property type="entry name" value="Prephen_DH"/>
</dbReference>
<dbReference type="InterPro" id="IPR045011">
    <property type="entry name" value="TYRAAT1/2"/>
</dbReference>
<dbReference type="PANTHER" id="PTHR43207:SF8">
    <property type="entry name" value="AROGENATE DEHYDROGENASE 1, CHLOROPLASTIC"/>
    <property type="match status" value="1"/>
</dbReference>
<dbReference type="PANTHER" id="PTHR43207">
    <property type="entry name" value="AROGENATE DEHYDROGENASE-RELATED"/>
    <property type="match status" value="1"/>
</dbReference>
<dbReference type="Pfam" id="PF03807">
    <property type="entry name" value="F420_oxidored"/>
    <property type="match status" value="1"/>
</dbReference>
<dbReference type="Pfam" id="PF02153">
    <property type="entry name" value="PDH_N"/>
    <property type="match status" value="1"/>
</dbReference>
<dbReference type="SUPFAM" id="SSF48179">
    <property type="entry name" value="6-phosphogluconate dehydrogenase C-terminal domain-like"/>
    <property type="match status" value="1"/>
</dbReference>
<dbReference type="SUPFAM" id="SSF51735">
    <property type="entry name" value="NAD(P)-binding Rossmann-fold domains"/>
    <property type="match status" value="2"/>
</dbReference>
<dbReference type="PROSITE" id="PS51176">
    <property type="entry name" value="PDH_ADH"/>
    <property type="match status" value="2"/>
</dbReference>
<keyword id="KW-0028">Amino-acid biosynthesis</keyword>
<keyword id="KW-0057">Aromatic amino acid biosynthesis</keyword>
<keyword id="KW-0150">Chloroplast</keyword>
<keyword id="KW-0521">NADP</keyword>
<keyword id="KW-0560">Oxidoreductase</keyword>
<keyword id="KW-0934">Plastid</keyword>
<keyword id="KW-1185">Reference proteome</keyword>
<keyword id="KW-0677">Repeat</keyword>
<keyword id="KW-0809">Transit peptide</keyword>
<keyword id="KW-0827">Tyrosine biosynthesis</keyword>
<accession>Q944B6</accession>
<accession>O82603</accession>
<feature type="transit peptide" description="Chloroplast" evidence="1">
    <location>
        <begin position="1"/>
        <end position="18"/>
    </location>
</feature>
<feature type="chain" id="PRO_0000269677" description="Arogenate dehydrogenase 1, chloroplastic">
    <location>
        <begin position="19"/>
        <end position="640"/>
    </location>
</feature>
<feature type="domain" description="Prephenate/arogenate dehydrogenase 1" evidence="2">
    <location>
        <begin position="53"/>
        <end position="334"/>
    </location>
</feature>
<feature type="domain" description="Prephenate/arogenate dehydrogenase 2" evidence="2">
    <location>
        <begin position="365"/>
        <end position="640"/>
    </location>
</feature>
<evidence type="ECO:0000255" key="1"/>
<evidence type="ECO:0000255" key="2">
    <source>
        <dbReference type="PROSITE-ProRule" id="PRU00522"/>
    </source>
</evidence>
<evidence type="ECO:0000269" key="3">
    <source>
    </source>
</evidence>
<evidence type="ECO:0000269" key="4">
    <source>
    </source>
</evidence>
<evidence type="ECO:0000269" key="5">
    <source>
    </source>
</evidence>
<evidence type="ECO:0000305" key="6"/>
<reference key="1">
    <citation type="journal article" date="2002" name="Plant Mol. Biol.">
        <title>Molecular and biochemical characterization of an Arabidopsis thaliana arogenate dehydrogenase with two highly similar and active protein domains.</title>
        <authorList>
            <person name="Rippert P."/>
            <person name="Matringe M."/>
        </authorList>
    </citation>
    <scope>NUCLEOTIDE SEQUENCE [MRNA]</scope>
    <scope>INDUCTION</scope>
    <scope>BIOPHYSICOCHEMICAL PROPERTIES</scope>
    <source>
        <strain>cv. Columbia</strain>
    </source>
</reference>
<reference key="2">
    <citation type="journal article" date="2000" name="Nature">
        <title>Sequence and analysis of chromosome 5 of the plant Arabidopsis thaliana.</title>
        <authorList>
            <person name="Tabata S."/>
            <person name="Kaneko T."/>
            <person name="Nakamura Y."/>
            <person name="Kotani H."/>
            <person name="Kato T."/>
            <person name="Asamizu E."/>
            <person name="Miyajima N."/>
            <person name="Sasamoto S."/>
            <person name="Kimura T."/>
            <person name="Hosouchi T."/>
            <person name="Kawashima K."/>
            <person name="Kohara M."/>
            <person name="Matsumoto M."/>
            <person name="Matsuno A."/>
            <person name="Muraki A."/>
            <person name="Nakayama S."/>
            <person name="Nakazaki N."/>
            <person name="Naruo K."/>
            <person name="Okumura S."/>
            <person name="Shinpo S."/>
            <person name="Takeuchi C."/>
            <person name="Wada T."/>
            <person name="Watanabe A."/>
            <person name="Yamada M."/>
            <person name="Yasuda M."/>
            <person name="Sato S."/>
            <person name="de la Bastide M."/>
            <person name="Huang E."/>
            <person name="Spiegel L."/>
            <person name="Gnoj L."/>
            <person name="O'Shaughnessy A."/>
            <person name="Preston R."/>
            <person name="Habermann K."/>
            <person name="Murray J."/>
            <person name="Johnson D."/>
            <person name="Rohlfing T."/>
            <person name="Nelson J."/>
            <person name="Stoneking T."/>
            <person name="Pepin K."/>
            <person name="Spieth J."/>
            <person name="Sekhon M."/>
            <person name="Armstrong J."/>
            <person name="Becker M."/>
            <person name="Belter E."/>
            <person name="Cordum H."/>
            <person name="Cordes M."/>
            <person name="Courtney L."/>
            <person name="Courtney W."/>
            <person name="Dante M."/>
            <person name="Du H."/>
            <person name="Edwards J."/>
            <person name="Fryman J."/>
            <person name="Haakensen B."/>
            <person name="Lamar E."/>
            <person name="Latreille P."/>
            <person name="Leonard S."/>
            <person name="Meyer R."/>
            <person name="Mulvaney E."/>
            <person name="Ozersky P."/>
            <person name="Riley A."/>
            <person name="Strowmatt C."/>
            <person name="Wagner-McPherson C."/>
            <person name="Wollam A."/>
            <person name="Yoakum M."/>
            <person name="Bell M."/>
            <person name="Dedhia N."/>
            <person name="Parnell L."/>
            <person name="Shah R."/>
            <person name="Rodriguez M."/>
            <person name="Hoon See L."/>
            <person name="Vil D."/>
            <person name="Baker J."/>
            <person name="Kirchoff K."/>
            <person name="Toth K."/>
            <person name="King L."/>
            <person name="Bahret A."/>
            <person name="Miller B."/>
            <person name="Marra M.A."/>
            <person name="Martienssen R."/>
            <person name="McCombie W.R."/>
            <person name="Wilson R.K."/>
            <person name="Murphy G."/>
            <person name="Bancroft I."/>
            <person name="Volckaert G."/>
            <person name="Wambutt R."/>
            <person name="Duesterhoeft A."/>
            <person name="Stiekema W."/>
            <person name="Pohl T."/>
            <person name="Entian K.-D."/>
            <person name="Terryn N."/>
            <person name="Hartley N."/>
            <person name="Bent E."/>
            <person name="Johnson S."/>
            <person name="Langham S.-A."/>
            <person name="McCullagh B."/>
            <person name="Robben J."/>
            <person name="Grymonprez B."/>
            <person name="Zimmermann W."/>
            <person name="Ramsperger U."/>
            <person name="Wedler H."/>
            <person name="Balke K."/>
            <person name="Wedler E."/>
            <person name="Peters S."/>
            <person name="van Staveren M."/>
            <person name="Dirkse W."/>
            <person name="Mooijman P."/>
            <person name="Klein Lankhorst R."/>
            <person name="Weitzenegger T."/>
            <person name="Bothe G."/>
            <person name="Rose M."/>
            <person name="Hauf J."/>
            <person name="Berneiser S."/>
            <person name="Hempel S."/>
            <person name="Feldpausch M."/>
            <person name="Lamberth S."/>
            <person name="Villarroel R."/>
            <person name="Gielen J."/>
            <person name="Ardiles W."/>
            <person name="Bents O."/>
            <person name="Lemcke K."/>
            <person name="Kolesov G."/>
            <person name="Mayer K.F.X."/>
            <person name="Rudd S."/>
            <person name="Schoof H."/>
            <person name="Schueller C."/>
            <person name="Zaccaria P."/>
            <person name="Mewes H.-W."/>
            <person name="Bevan M."/>
            <person name="Fransz P.F."/>
        </authorList>
    </citation>
    <scope>NUCLEOTIDE SEQUENCE [LARGE SCALE GENOMIC DNA]</scope>
    <source>
        <strain>cv. Columbia</strain>
    </source>
</reference>
<reference key="3">
    <citation type="submission" date="1999-04" db="EMBL/GenBank/DDBJ databases">
        <title>Structural analysis of Arabidopsis thaliana chromosome 5. XI.</title>
        <authorList>
            <person name="Kaneko T."/>
            <person name="Katoh T."/>
            <person name="Asamizu E."/>
            <person name="Sato S."/>
            <person name="Nakamura Y."/>
            <person name="Kotani H."/>
            <person name="Tabata S."/>
        </authorList>
    </citation>
    <scope>NUCLEOTIDE SEQUENCE [LARGE SCALE GENOMIC DNA]</scope>
    <source>
        <strain>cv. Columbia</strain>
    </source>
</reference>
<reference key="4">
    <citation type="journal article" date="2017" name="Plant J.">
        <title>Araport11: a complete reannotation of the Arabidopsis thaliana reference genome.</title>
        <authorList>
            <person name="Cheng C.Y."/>
            <person name="Krishnakumar V."/>
            <person name="Chan A.P."/>
            <person name="Thibaud-Nissen F."/>
            <person name="Schobel S."/>
            <person name="Town C.D."/>
        </authorList>
    </citation>
    <scope>GENOME REANNOTATION</scope>
    <source>
        <strain>cv. Columbia</strain>
    </source>
</reference>
<reference key="5">
    <citation type="journal article" date="2002" name="Eur. J. Biochem.">
        <title>Purification and kinetic analysis of the two recombinant arogenate dehydrogenase isoforms of Arabidopsis thaliana.</title>
        <authorList>
            <person name="Rippert P."/>
            <person name="Matringe M."/>
        </authorList>
    </citation>
    <scope>FUNCTION</scope>
    <scope>BIOPHYSICOCHEMICAL PROPERTIES</scope>
</reference>
<reference key="6">
    <citation type="journal article" date="2009" name="Plant Physiol.">
        <title>Tyrosine and phenylalanine are synthesized within the plastids in Arabidopsis.</title>
        <authorList>
            <person name="Rippert P."/>
            <person name="Puyaubert J."/>
            <person name="Grisollet D."/>
            <person name="Derrier L."/>
            <person name="Matringe M."/>
        </authorList>
    </citation>
    <scope>SUBCELLULAR LOCATION</scope>
    <scope>TISSUE SPECIFICITY</scope>
    <scope>LACK OF PROCESSING</scope>
</reference>
<organism>
    <name type="scientific">Arabidopsis thaliana</name>
    <name type="common">Mouse-ear cress</name>
    <dbReference type="NCBI Taxonomy" id="3702"/>
    <lineage>
        <taxon>Eukaryota</taxon>
        <taxon>Viridiplantae</taxon>
        <taxon>Streptophyta</taxon>
        <taxon>Embryophyta</taxon>
        <taxon>Tracheophyta</taxon>
        <taxon>Spermatophyta</taxon>
        <taxon>Magnoliopsida</taxon>
        <taxon>eudicotyledons</taxon>
        <taxon>Gunneridae</taxon>
        <taxon>Pentapetalae</taxon>
        <taxon>rosids</taxon>
        <taxon>malvids</taxon>
        <taxon>Brassicales</taxon>
        <taxon>Brassicaceae</taxon>
        <taxon>Camelineae</taxon>
        <taxon>Arabidopsis</taxon>
    </lineage>
</organism>
<proteinExistence type="evidence at protein level"/>
<protein>
    <recommendedName>
        <fullName>Arogenate dehydrogenase 1, chloroplastic</fullName>
        <ecNumber>1.3.1.78</ecNumber>
    </recommendedName>
    <alternativeName>
        <fullName>TYRATC</fullName>
    </alternativeName>
    <alternativeName>
        <fullName>TyrAAT1</fullName>
    </alternativeName>
</protein>
<gene>
    <name type="primary">TYRAAT1</name>
    <name type="ordered locus">At5g34930</name>
    <name type="ORF">T2L5.1</name>
</gene>